<accession>P9WKW5</accession>
<accession>L0TDX7</accession>
<accession>P96243</accession>
<accession>Q7D4S2</accession>
<gene>
    <name type="ordered locus">Rv3835</name>
</gene>
<proteinExistence type="evidence at protein level"/>
<protein>
    <recommendedName>
        <fullName>Uncharacterized membrane protein Rv3835</fullName>
    </recommendedName>
</protein>
<feature type="chain" id="PRO_0000390678" description="Uncharacterized membrane protein Rv3835">
    <location>
        <begin position="1"/>
        <end position="449"/>
    </location>
</feature>
<feature type="transmembrane region" description="Helical" evidence="1">
    <location>
        <begin position="45"/>
        <end position="65"/>
    </location>
</feature>
<feature type="region of interest" description="Disordered" evidence="2">
    <location>
        <begin position="1"/>
        <end position="33"/>
    </location>
</feature>
<feature type="region of interest" description="Disordered" evidence="2">
    <location>
        <begin position="349"/>
        <end position="449"/>
    </location>
</feature>
<feature type="compositionally biased region" description="Acidic residues" evidence="2">
    <location>
        <begin position="1"/>
        <end position="11"/>
    </location>
</feature>
<feature type="compositionally biased region" description="Pro residues" evidence="2">
    <location>
        <begin position="365"/>
        <end position="387"/>
    </location>
</feature>
<feature type="compositionally biased region" description="Low complexity" evidence="2">
    <location>
        <begin position="409"/>
        <end position="418"/>
    </location>
</feature>
<feature type="compositionally biased region" description="Pro residues" evidence="2">
    <location>
        <begin position="437"/>
        <end position="449"/>
    </location>
</feature>
<dbReference type="EMBL" id="AL123456">
    <property type="protein sequence ID" value="CCP46664.1"/>
    <property type="molecule type" value="Genomic_DNA"/>
</dbReference>
<dbReference type="PIR" id="H70652">
    <property type="entry name" value="H70652"/>
</dbReference>
<dbReference type="RefSeq" id="NP_218352.1">
    <property type="nucleotide sequence ID" value="NC_000962.3"/>
</dbReference>
<dbReference type="RefSeq" id="WP_003420892.1">
    <property type="nucleotide sequence ID" value="NZ_NVQJ01000022.1"/>
</dbReference>
<dbReference type="STRING" id="83332.Rv3835"/>
<dbReference type="PaxDb" id="83332-Rv3835"/>
<dbReference type="DNASU" id="886168"/>
<dbReference type="GeneID" id="886168"/>
<dbReference type="KEGG" id="mtu:Rv3835"/>
<dbReference type="KEGG" id="mtv:RVBD_3835"/>
<dbReference type="PATRIC" id="fig|83332.111.peg.4262"/>
<dbReference type="TubercuList" id="Rv3835"/>
<dbReference type="eggNOG" id="ENOG5030VN0">
    <property type="taxonomic scope" value="Bacteria"/>
</dbReference>
<dbReference type="InParanoid" id="P9WKW5"/>
<dbReference type="OrthoDB" id="4266126at2"/>
<dbReference type="Proteomes" id="UP000001584">
    <property type="component" value="Chromosome"/>
</dbReference>
<dbReference type="GO" id="GO:0005576">
    <property type="term" value="C:extracellular region"/>
    <property type="evidence" value="ECO:0007005"/>
    <property type="project" value="MTBBASE"/>
</dbReference>
<dbReference type="GO" id="GO:0009274">
    <property type="term" value="C:peptidoglycan-based cell wall"/>
    <property type="evidence" value="ECO:0007005"/>
    <property type="project" value="MTBBASE"/>
</dbReference>
<dbReference type="GO" id="GO:0005886">
    <property type="term" value="C:plasma membrane"/>
    <property type="evidence" value="ECO:0007005"/>
    <property type="project" value="MTBBASE"/>
</dbReference>
<dbReference type="InterPro" id="IPR026004">
    <property type="entry name" value="Septum_form"/>
</dbReference>
<dbReference type="Pfam" id="PF13845">
    <property type="entry name" value="Septum_form"/>
    <property type="match status" value="1"/>
</dbReference>
<organism>
    <name type="scientific">Mycobacterium tuberculosis (strain ATCC 25618 / H37Rv)</name>
    <dbReference type="NCBI Taxonomy" id="83332"/>
    <lineage>
        <taxon>Bacteria</taxon>
        <taxon>Bacillati</taxon>
        <taxon>Actinomycetota</taxon>
        <taxon>Actinomycetes</taxon>
        <taxon>Mycobacteriales</taxon>
        <taxon>Mycobacteriaceae</taxon>
        <taxon>Mycobacterium</taxon>
        <taxon>Mycobacterium tuberculosis complex</taxon>
    </lineage>
</organism>
<keyword id="KW-1003">Cell membrane</keyword>
<keyword id="KW-0472">Membrane</keyword>
<keyword id="KW-1185">Reference proteome</keyword>
<keyword id="KW-0964">Secreted</keyword>
<keyword id="KW-0812">Transmembrane</keyword>
<keyword id="KW-1133">Transmembrane helix</keyword>
<sequence length="449" mass="47043">MLDAPEQDPVDPGDPASPPHGEAEQPLPGPRWPRALRASATRRALLLTALGGLLIAGLVTAIPAVGRAPERLAGYIASNPVPSTGAKINASFNRVASGDCLMWPDGTPESAAIVSCADEHRFEVAESIDMRTFPGMEYGQNAAPPSPARIQQISEEQCEAAVRRYLGTKFDPNSKFTISMLWPGDRAWRQAGERRMLCGLQSPGPNNQQLAFKGKVADIDQSKVWPAGTCLGIDATTNQPIDVPVDCAAPHAMEVSGTVNLAERFPDALPSEPEQDGFIKDACTRMTDAYLAPLKLRTTTLTLIYPTLTLPSWSAGSRVVACSIGATLGNGGWATLVNSAKGALLINGQPPVPPPDIPEERLNLPPIPLQLPTPRPAPPAQQLPSTPPGTQHLPAQQPVVTPTRPPESHAPASAAPAETQPPPPDAGAPPATQSPEATPPGPAEPAPAG</sequence>
<comment type="function">
    <text evidence="4">May play a role in septum formation.</text>
</comment>
<comment type="subcellular location">
    <subcellularLocation>
        <location evidence="6">Cell membrane</location>
        <topology evidence="6">Single-pass membrane protein</topology>
    </subcellularLocation>
    <subcellularLocation>
        <location evidence="5">Secreted</location>
    </subcellularLocation>
</comment>
<comment type="induction">
    <text evidence="3 4">Down-regulated upon starvation. Induced by albendazole and thiabendazole, which inhibit the GTPase activity of FtsZ and probably septum formation.</text>
</comment>
<comment type="miscellaneous">
    <text>Has been detected in culture filtrate but no signal sequence is predicted by bioinformatic programs.</text>
</comment>
<name>Y3835_MYCTU</name>
<evidence type="ECO:0000255" key="1"/>
<evidence type="ECO:0000256" key="2">
    <source>
        <dbReference type="SAM" id="MobiDB-lite"/>
    </source>
</evidence>
<evidence type="ECO:0000269" key="3">
    <source>
    </source>
</evidence>
<evidence type="ECO:0000269" key="4">
    <source>
    </source>
</evidence>
<evidence type="ECO:0000269" key="5">
    <source>
    </source>
</evidence>
<evidence type="ECO:0000305" key="6"/>
<reference key="1">
    <citation type="journal article" date="1998" name="Nature">
        <title>Deciphering the biology of Mycobacterium tuberculosis from the complete genome sequence.</title>
        <authorList>
            <person name="Cole S.T."/>
            <person name="Brosch R."/>
            <person name="Parkhill J."/>
            <person name="Garnier T."/>
            <person name="Churcher C.M."/>
            <person name="Harris D.E."/>
            <person name="Gordon S.V."/>
            <person name="Eiglmeier K."/>
            <person name="Gas S."/>
            <person name="Barry C.E. III"/>
            <person name="Tekaia F."/>
            <person name="Badcock K."/>
            <person name="Basham D."/>
            <person name="Brown D."/>
            <person name="Chillingworth T."/>
            <person name="Connor R."/>
            <person name="Davies R.M."/>
            <person name="Devlin K."/>
            <person name="Feltwell T."/>
            <person name="Gentles S."/>
            <person name="Hamlin N."/>
            <person name="Holroyd S."/>
            <person name="Hornsby T."/>
            <person name="Jagels K."/>
            <person name="Krogh A."/>
            <person name="McLean J."/>
            <person name="Moule S."/>
            <person name="Murphy L.D."/>
            <person name="Oliver S."/>
            <person name="Osborne J."/>
            <person name="Quail M.A."/>
            <person name="Rajandream M.A."/>
            <person name="Rogers J."/>
            <person name="Rutter S."/>
            <person name="Seeger K."/>
            <person name="Skelton S."/>
            <person name="Squares S."/>
            <person name="Squares R."/>
            <person name="Sulston J.E."/>
            <person name="Taylor K."/>
            <person name="Whitehead S."/>
            <person name="Barrell B.G."/>
        </authorList>
    </citation>
    <scope>NUCLEOTIDE SEQUENCE [LARGE SCALE GENOMIC DNA]</scope>
    <source>
        <strain>ATCC 25618 / H37Rv</strain>
    </source>
</reference>
<reference key="2">
    <citation type="journal article" date="2002" name="Mol. Microbiol.">
        <title>Evaluation of a nutrient starvation model of Mycobacterium tuberculosis persistence by gene and protein expression profiling.</title>
        <authorList>
            <person name="Betts J.C."/>
            <person name="Lukey P.T."/>
            <person name="Robb L.C."/>
            <person name="McAdam R.A."/>
            <person name="Duncan K."/>
        </authorList>
    </citation>
    <scope>INDUCTION BY STARVATION</scope>
</reference>
<reference key="3">
    <citation type="journal article" date="2006" name="Microbiology">
        <title>Identification of cell cycle regulators in Mycobacterium tuberculosis by inhibition of septum formation and global transcriptional analysis.</title>
        <authorList>
            <person name="Slayden R.A."/>
            <person name="Knudson D.L."/>
            <person name="Belisle J.T."/>
        </authorList>
    </citation>
    <scope>INDUCTION BY FTSZ INHIBITORS</scope>
    <scope>FUNCTION</scope>
    <source>
        <strain>ATCC 25618 / H37Rv</strain>
    </source>
</reference>
<reference key="4">
    <citation type="journal article" date="2007" name="Proteomics">
        <title>Comprehensive analysis of exported proteins from Mycobacterium tuberculosis H37Rv.</title>
        <authorList>
            <person name="Malen H."/>
            <person name="Berven F.S."/>
            <person name="Fladmark K.E."/>
            <person name="Wiker H.G."/>
        </authorList>
    </citation>
    <scope>IDENTIFICATION BY MASS SPECTROMETRY</scope>
    <scope>SUBCELLULAR LOCATION</scope>
    <source>
        <strain>ATCC 27294 / TMC 102 / H37Rv</strain>
    </source>
</reference>
<reference key="5">
    <citation type="journal article" date="2011" name="Mol. Cell. Proteomics">
        <title>Proteogenomic analysis of Mycobacterium tuberculosis by high resolution mass spectrometry.</title>
        <authorList>
            <person name="Kelkar D.S."/>
            <person name="Kumar D."/>
            <person name="Kumar P."/>
            <person name="Balakrishnan L."/>
            <person name="Muthusamy B."/>
            <person name="Yadav A.K."/>
            <person name="Shrivastava P."/>
            <person name="Marimuthu A."/>
            <person name="Anand S."/>
            <person name="Sundaram H."/>
            <person name="Kingsbury R."/>
            <person name="Harsha H.C."/>
            <person name="Nair B."/>
            <person name="Prasad T.S."/>
            <person name="Chauhan D.S."/>
            <person name="Katoch K."/>
            <person name="Katoch V.M."/>
            <person name="Kumar P."/>
            <person name="Chaerkady R."/>
            <person name="Ramachandran S."/>
            <person name="Dash D."/>
            <person name="Pandey A."/>
        </authorList>
    </citation>
    <scope>IDENTIFICATION BY MASS SPECTROMETRY [LARGE SCALE ANALYSIS]</scope>
    <source>
        <strain>ATCC 25618 / H37Rv</strain>
    </source>
</reference>